<sequence>MRIILLGAPGAGKGTQAQFIMEKFGIPQISTGDMLRAAIKAGTELGKQAKAVIDAGQLVSDDIILGLIKERIAQADCEKGFLLDGFPRTIPQADGLKEMGINVDYVIEFDVADDVIVERMAGRRAHLPSGRTYHVVYNPPKVEGKDDVTGEDLVIREDDKEETVRARLNVYHTQTAPLIEYYGKEAAAGKTQYLKFDGTKQVSEVSADIAKALA</sequence>
<reference key="1">
    <citation type="journal article" date="2008" name="PLoS ONE">
        <title>A recalibrated molecular clock and independent origins for the cholera pandemic clones.</title>
        <authorList>
            <person name="Feng L."/>
            <person name="Reeves P.R."/>
            <person name="Lan R."/>
            <person name="Ren Y."/>
            <person name="Gao C."/>
            <person name="Zhou Z."/>
            <person name="Ren Y."/>
            <person name="Cheng J."/>
            <person name="Wang W."/>
            <person name="Wang J."/>
            <person name="Qian W."/>
            <person name="Li D."/>
            <person name="Wang L."/>
        </authorList>
    </citation>
    <scope>NUCLEOTIDE SEQUENCE [LARGE SCALE GENOMIC DNA]</scope>
    <source>
        <strain>M66-2</strain>
    </source>
</reference>
<comment type="function">
    <text evidence="1">Catalyzes the reversible transfer of the terminal phosphate group between ATP and AMP. Plays an important role in cellular energy homeostasis and in adenine nucleotide metabolism.</text>
</comment>
<comment type="catalytic activity">
    <reaction evidence="1">
        <text>AMP + ATP = 2 ADP</text>
        <dbReference type="Rhea" id="RHEA:12973"/>
        <dbReference type="ChEBI" id="CHEBI:30616"/>
        <dbReference type="ChEBI" id="CHEBI:456215"/>
        <dbReference type="ChEBI" id="CHEBI:456216"/>
        <dbReference type="EC" id="2.7.4.3"/>
    </reaction>
</comment>
<comment type="pathway">
    <text evidence="1">Purine metabolism; AMP biosynthesis via salvage pathway; AMP from ADP: step 1/1.</text>
</comment>
<comment type="subunit">
    <text evidence="1">Monomer.</text>
</comment>
<comment type="subcellular location">
    <subcellularLocation>
        <location evidence="1">Cytoplasm</location>
    </subcellularLocation>
</comment>
<comment type="domain">
    <text evidence="1">Consists of three domains, a large central CORE domain and two small peripheral domains, NMPbind and LID, which undergo movements during catalysis. The LID domain closes over the site of phosphoryl transfer upon ATP binding. Assembling and dissambling the active center during each catalytic cycle provides an effective means to prevent ATP hydrolysis.</text>
</comment>
<comment type="similarity">
    <text evidence="1">Belongs to the adenylate kinase family.</text>
</comment>
<organism>
    <name type="scientific">Vibrio cholerae serotype O1 (strain M66-2)</name>
    <dbReference type="NCBI Taxonomy" id="579112"/>
    <lineage>
        <taxon>Bacteria</taxon>
        <taxon>Pseudomonadati</taxon>
        <taxon>Pseudomonadota</taxon>
        <taxon>Gammaproteobacteria</taxon>
        <taxon>Vibrionales</taxon>
        <taxon>Vibrionaceae</taxon>
        <taxon>Vibrio</taxon>
    </lineage>
</organism>
<accession>C3LTN4</accession>
<dbReference type="EC" id="2.7.4.3" evidence="1"/>
<dbReference type="EMBL" id="CP001233">
    <property type="protein sequence ID" value="ACP05260.1"/>
    <property type="molecule type" value="Genomic_DNA"/>
</dbReference>
<dbReference type="RefSeq" id="WP_001220222.1">
    <property type="nucleotide sequence ID" value="NC_012578.1"/>
</dbReference>
<dbReference type="SMR" id="C3LTN4"/>
<dbReference type="GeneID" id="89514907"/>
<dbReference type="KEGG" id="vcm:VCM66_0942"/>
<dbReference type="HOGENOM" id="CLU_032354_1_2_6"/>
<dbReference type="UniPathway" id="UPA00588">
    <property type="reaction ID" value="UER00649"/>
</dbReference>
<dbReference type="Proteomes" id="UP000001217">
    <property type="component" value="Chromosome I"/>
</dbReference>
<dbReference type="GO" id="GO:0005737">
    <property type="term" value="C:cytoplasm"/>
    <property type="evidence" value="ECO:0007669"/>
    <property type="project" value="UniProtKB-SubCell"/>
</dbReference>
<dbReference type="GO" id="GO:0004017">
    <property type="term" value="F:adenylate kinase activity"/>
    <property type="evidence" value="ECO:0007669"/>
    <property type="project" value="UniProtKB-UniRule"/>
</dbReference>
<dbReference type="GO" id="GO:0005524">
    <property type="term" value="F:ATP binding"/>
    <property type="evidence" value="ECO:0007669"/>
    <property type="project" value="UniProtKB-UniRule"/>
</dbReference>
<dbReference type="GO" id="GO:0044209">
    <property type="term" value="P:AMP salvage"/>
    <property type="evidence" value="ECO:0007669"/>
    <property type="project" value="UniProtKB-UniRule"/>
</dbReference>
<dbReference type="CDD" id="cd01428">
    <property type="entry name" value="ADK"/>
    <property type="match status" value="1"/>
</dbReference>
<dbReference type="FunFam" id="3.40.50.300:FF:000106">
    <property type="entry name" value="Adenylate kinase mitochondrial"/>
    <property type="match status" value="1"/>
</dbReference>
<dbReference type="Gene3D" id="3.40.50.300">
    <property type="entry name" value="P-loop containing nucleotide triphosphate hydrolases"/>
    <property type="match status" value="1"/>
</dbReference>
<dbReference type="HAMAP" id="MF_00235">
    <property type="entry name" value="Adenylate_kinase_Adk"/>
    <property type="match status" value="1"/>
</dbReference>
<dbReference type="InterPro" id="IPR006259">
    <property type="entry name" value="Adenyl_kin_sub"/>
</dbReference>
<dbReference type="InterPro" id="IPR000850">
    <property type="entry name" value="Adenylat/UMP-CMP_kin"/>
</dbReference>
<dbReference type="InterPro" id="IPR033690">
    <property type="entry name" value="Adenylat_kinase_CS"/>
</dbReference>
<dbReference type="InterPro" id="IPR007862">
    <property type="entry name" value="Adenylate_kinase_lid-dom"/>
</dbReference>
<dbReference type="InterPro" id="IPR027417">
    <property type="entry name" value="P-loop_NTPase"/>
</dbReference>
<dbReference type="NCBIfam" id="TIGR01351">
    <property type="entry name" value="adk"/>
    <property type="match status" value="1"/>
</dbReference>
<dbReference type="NCBIfam" id="NF001379">
    <property type="entry name" value="PRK00279.1-1"/>
    <property type="match status" value="1"/>
</dbReference>
<dbReference type="NCBIfam" id="NF001380">
    <property type="entry name" value="PRK00279.1-2"/>
    <property type="match status" value="1"/>
</dbReference>
<dbReference type="NCBIfam" id="NF001381">
    <property type="entry name" value="PRK00279.1-3"/>
    <property type="match status" value="1"/>
</dbReference>
<dbReference type="NCBIfam" id="NF011100">
    <property type="entry name" value="PRK14527.1"/>
    <property type="match status" value="1"/>
</dbReference>
<dbReference type="PANTHER" id="PTHR23359">
    <property type="entry name" value="NUCLEOTIDE KINASE"/>
    <property type="match status" value="1"/>
</dbReference>
<dbReference type="Pfam" id="PF00406">
    <property type="entry name" value="ADK"/>
    <property type="match status" value="1"/>
</dbReference>
<dbReference type="Pfam" id="PF05191">
    <property type="entry name" value="ADK_lid"/>
    <property type="match status" value="1"/>
</dbReference>
<dbReference type="PRINTS" id="PR00094">
    <property type="entry name" value="ADENYLTKNASE"/>
</dbReference>
<dbReference type="SUPFAM" id="SSF52540">
    <property type="entry name" value="P-loop containing nucleoside triphosphate hydrolases"/>
    <property type="match status" value="1"/>
</dbReference>
<dbReference type="PROSITE" id="PS00113">
    <property type="entry name" value="ADENYLATE_KINASE"/>
    <property type="match status" value="1"/>
</dbReference>
<gene>
    <name evidence="1" type="primary">adk</name>
    <name type="ordered locus">VCM66_0942</name>
</gene>
<protein>
    <recommendedName>
        <fullName evidence="1">Adenylate kinase</fullName>
        <shortName evidence="1">AK</shortName>
        <ecNumber evidence="1">2.7.4.3</ecNumber>
    </recommendedName>
    <alternativeName>
        <fullName evidence="1">ATP-AMP transphosphorylase</fullName>
    </alternativeName>
    <alternativeName>
        <fullName evidence="1">ATP:AMP phosphotransferase</fullName>
    </alternativeName>
    <alternativeName>
        <fullName evidence="1">Adenylate monophosphate kinase</fullName>
    </alternativeName>
</protein>
<proteinExistence type="inferred from homology"/>
<name>KAD_VIBCM</name>
<keyword id="KW-0067">ATP-binding</keyword>
<keyword id="KW-0963">Cytoplasm</keyword>
<keyword id="KW-0418">Kinase</keyword>
<keyword id="KW-0545">Nucleotide biosynthesis</keyword>
<keyword id="KW-0547">Nucleotide-binding</keyword>
<keyword id="KW-0808">Transferase</keyword>
<evidence type="ECO:0000255" key="1">
    <source>
        <dbReference type="HAMAP-Rule" id="MF_00235"/>
    </source>
</evidence>
<feature type="chain" id="PRO_1000125170" description="Adenylate kinase">
    <location>
        <begin position="1"/>
        <end position="214"/>
    </location>
</feature>
<feature type="region of interest" description="NMP" evidence="1">
    <location>
        <begin position="30"/>
        <end position="59"/>
    </location>
</feature>
<feature type="region of interest" description="LID" evidence="1">
    <location>
        <begin position="122"/>
        <end position="159"/>
    </location>
</feature>
<feature type="binding site" evidence="1">
    <location>
        <begin position="10"/>
        <end position="15"/>
    </location>
    <ligand>
        <name>ATP</name>
        <dbReference type="ChEBI" id="CHEBI:30616"/>
    </ligand>
</feature>
<feature type="binding site" evidence="1">
    <location>
        <position position="31"/>
    </location>
    <ligand>
        <name>AMP</name>
        <dbReference type="ChEBI" id="CHEBI:456215"/>
    </ligand>
</feature>
<feature type="binding site" evidence="1">
    <location>
        <position position="36"/>
    </location>
    <ligand>
        <name>AMP</name>
        <dbReference type="ChEBI" id="CHEBI:456215"/>
    </ligand>
</feature>
<feature type="binding site" evidence="1">
    <location>
        <begin position="57"/>
        <end position="59"/>
    </location>
    <ligand>
        <name>AMP</name>
        <dbReference type="ChEBI" id="CHEBI:456215"/>
    </ligand>
</feature>
<feature type="binding site" evidence="1">
    <location>
        <begin position="85"/>
        <end position="88"/>
    </location>
    <ligand>
        <name>AMP</name>
        <dbReference type="ChEBI" id="CHEBI:456215"/>
    </ligand>
</feature>
<feature type="binding site" evidence="1">
    <location>
        <position position="92"/>
    </location>
    <ligand>
        <name>AMP</name>
        <dbReference type="ChEBI" id="CHEBI:456215"/>
    </ligand>
</feature>
<feature type="binding site" evidence="1">
    <location>
        <position position="123"/>
    </location>
    <ligand>
        <name>ATP</name>
        <dbReference type="ChEBI" id="CHEBI:30616"/>
    </ligand>
</feature>
<feature type="binding site" evidence="1">
    <location>
        <begin position="132"/>
        <end position="133"/>
    </location>
    <ligand>
        <name>ATP</name>
        <dbReference type="ChEBI" id="CHEBI:30616"/>
    </ligand>
</feature>
<feature type="binding site" evidence="1">
    <location>
        <position position="156"/>
    </location>
    <ligand>
        <name>AMP</name>
        <dbReference type="ChEBI" id="CHEBI:456215"/>
    </ligand>
</feature>
<feature type="binding site" evidence="1">
    <location>
        <position position="167"/>
    </location>
    <ligand>
        <name>AMP</name>
        <dbReference type="ChEBI" id="CHEBI:456215"/>
    </ligand>
</feature>
<feature type="binding site" evidence="1">
    <location>
        <position position="200"/>
    </location>
    <ligand>
        <name>ATP</name>
        <dbReference type="ChEBI" id="CHEBI:30616"/>
    </ligand>
</feature>